<accession>A1A070</accession>
<protein>
    <recommendedName>
        <fullName evidence="1">Large ribosomal subunit protein uL4</fullName>
    </recommendedName>
    <alternativeName>
        <fullName evidence="3">50S ribosomal protein L4</fullName>
    </alternativeName>
</protein>
<gene>
    <name evidence="1" type="primary">rplD</name>
    <name type="ordered locus">BAD_0322</name>
</gene>
<comment type="function">
    <text evidence="1">One of the primary rRNA binding proteins, this protein initially binds near the 5'-end of the 23S rRNA. It is important during the early stages of 50S assembly. It makes multiple contacts with different domains of the 23S rRNA in the assembled 50S subunit and ribosome.</text>
</comment>
<comment type="function">
    <text evidence="1">Forms part of the polypeptide exit tunnel.</text>
</comment>
<comment type="subunit">
    <text evidence="1">Part of the 50S ribosomal subunit.</text>
</comment>
<comment type="similarity">
    <text evidence="1">Belongs to the universal ribosomal protein uL4 family.</text>
</comment>
<name>RL4_BIFAA</name>
<evidence type="ECO:0000255" key="1">
    <source>
        <dbReference type="HAMAP-Rule" id="MF_01328"/>
    </source>
</evidence>
<evidence type="ECO:0000256" key="2">
    <source>
        <dbReference type="SAM" id="MobiDB-lite"/>
    </source>
</evidence>
<evidence type="ECO:0000305" key="3"/>
<keyword id="KW-1185">Reference proteome</keyword>
<keyword id="KW-0687">Ribonucleoprotein</keyword>
<keyword id="KW-0689">Ribosomal protein</keyword>
<keyword id="KW-0694">RNA-binding</keyword>
<keyword id="KW-0699">rRNA-binding</keyword>
<reference key="1">
    <citation type="submission" date="2006-12" db="EMBL/GenBank/DDBJ databases">
        <title>Bifidobacterium adolescentis complete genome sequence.</title>
        <authorList>
            <person name="Suzuki T."/>
            <person name="Tsuda Y."/>
            <person name="Kanou N."/>
            <person name="Inoue T."/>
            <person name="Kumazaki K."/>
            <person name="Nagano S."/>
            <person name="Hirai S."/>
            <person name="Tanaka K."/>
            <person name="Watanabe K."/>
        </authorList>
    </citation>
    <scope>NUCLEOTIDE SEQUENCE [LARGE SCALE GENOMIC DNA]</scope>
    <source>
        <strain>ATCC 15703 / DSM 20083 / NCTC 11814 / E194a</strain>
    </source>
</reference>
<feature type="chain" id="PRO_1000052358" description="Large ribosomal subunit protein uL4">
    <location>
        <begin position="1"/>
        <end position="221"/>
    </location>
</feature>
<feature type="region of interest" description="Disordered" evidence="2">
    <location>
        <begin position="56"/>
        <end position="83"/>
    </location>
</feature>
<organism>
    <name type="scientific">Bifidobacterium adolescentis (strain ATCC 15703 / DSM 20083 / NCTC 11814 / E194a)</name>
    <dbReference type="NCBI Taxonomy" id="367928"/>
    <lineage>
        <taxon>Bacteria</taxon>
        <taxon>Bacillati</taxon>
        <taxon>Actinomycetota</taxon>
        <taxon>Actinomycetes</taxon>
        <taxon>Bifidobacteriales</taxon>
        <taxon>Bifidobacteriaceae</taxon>
        <taxon>Bifidobacterium</taxon>
    </lineage>
</organism>
<proteinExistence type="inferred from homology"/>
<dbReference type="EMBL" id="AP009256">
    <property type="protein sequence ID" value="BAF39103.1"/>
    <property type="molecule type" value="Genomic_DNA"/>
</dbReference>
<dbReference type="RefSeq" id="WP_003808018.1">
    <property type="nucleotide sequence ID" value="NZ_CAXVNC010000001.1"/>
</dbReference>
<dbReference type="SMR" id="A1A070"/>
<dbReference type="STRING" id="367928.BAD_0322"/>
<dbReference type="PaxDb" id="1680-BADO_0329"/>
<dbReference type="GeneID" id="4556673"/>
<dbReference type="KEGG" id="bad:BAD_0322"/>
<dbReference type="HOGENOM" id="CLU_041575_5_0_11"/>
<dbReference type="Proteomes" id="UP000008702">
    <property type="component" value="Chromosome"/>
</dbReference>
<dbReference type="GO" id="GO:1990904">
    <property type="term" value="C:ribonucleoprotein complex"/>
    <property type="evidence" value="ECO:0007669"/>
    <property type="project" value="UniProtKB-KW"/>
</dbReference>
<dbReference type="GO" id="GO:0005840">
    <property type="term" value="C:ribosome"/>
    <property type="evidence" value="ECO:0007669"/>
    <property type="project" value="UniProtKB-KW"/>
</dbReference>
<dbReference type="GO" id="GO:0019843">
    <property type="term" value="F:rRNA binding"/>
    <property type="evidence" value="ECO:0007669"/>
    <property type="project" value="UniProtKB-UniRule"/>
</dbReference>
<dbReference type="GO" id="GO:0003735">
    <property type="term" value="F:structural constituent of ribosome"/>
    <property type="evidence" value="ECO:0007669"/>
    <property type="project" value="InterPro"/>
</dbReference>
<dbReference type="GO" id="GO:0006412">
    <property type="term" value="P:translation"/>
    <property type="evidence" value="ECO:0007669"/>
    <property type="project" value="UniProtKB-UniRule"/>
</dbReference>
<dbReference type="FunFam" id="3.40.1370.10:FF:000004">
    <property type="entry name" value="50S ribosomal protein L4"/>
    <property type="match status" value="1"/>
</dbReference>
<dbReference type="Gene3D" id="3.40.1370.10">
    <property type="match status" value="1"/>
</dbReference>
<dbReference type="HAMAP" id="MF_01328_B">
    <property type="entry name" value="Ribosomal_uL4_B"/>
    <property type="match status" value="1"/>
</dbReference>
<dbReference type="InterPro" id="IPR002136">
    <property type="entry name" value="Ribosomal_uL4"/>
</dbReference>
<dbReference type="InterPro" id="IPR013005">
    <property type="entry name" value="Ribosomal_uL4-like"/>
</dbReference>
<dbReference type="InterPro" id="IPR023574">
    <property type="entry name" value="Ribosomal_uL4_dom_sf"/>
</dbReference>
<dbReference type="NCBIfam" id="TIGR03953">
    <property type="entry name" value="rplD_bact"/>
    <property type="match status" value="1"/>
</dbReference>
<dbReference type="PANTHER" id="PTHR10746">
    <property type="entry name" value="50S RIBOSOMAL PROTEIN L4"/>
    <property type="match status" value="1"/>
</dbReference>
<dbReference type="PANTHER" id="PTHR10746:SF6">
    <property type="entry name" value="LARGE RIBOSOMAL SUBUNIT PROTEIN UL4M"/>
    <property type="match status" value="1"/>
</dbReference>
<dbReference type="Pfam" id="PF00573">
    <property type="entry name" value="Ribosomal_L4"/>
    <property type="match status" value="1"/>
</dbReference>
<dbReference type="SUPFAM" id="SSF52166">
    <property type="entry name" value="Ribosomal protein L4"/>
    <property type="match status" value="1"/>
</dbReference>
<sequence length="221" mass="23732">MANVTLNVTDNQGKATGTVDAPAEIFGFSAEEVQSRIPLIHQVVIAQLAAARQGTHATKTRGMVSGGGRKPWKQKGTGRARQGSIRAPQWYHGGTVFGPQPRDYSQRTPKKMKAAALKYVLSDRANAGHVAVVDFGVSEAPSTKAAVAALTPVTENKFTTVVLSRENVNEWLSVRNIPTVHPIFADQLNTYDVVTAQYVVFSKEGFDAFLAAKAEPAAKEA</sequence>